<evidence type="ECO:0000250" key="1">
    <source>
        <dbReference type="UniProtKB" id="A6NJ78"/>
    </source>
</evidence>
<evidence type="ECO:0000250" key="2">
    <source>
        <dbReference type="UniProtKB" id="Q9WZX6"/>
    </source>
</evidence>
<evidence type="ECO:0000255" key="3"/>
<evidence type="ECO:0000256" key="4">
    <source>
        <dbReference type="SAM" id="MobiDB-lite"/>
    </source>
</evidence>
<evidence type="ECO:0000305" key="5"/>
<organism>
    <name type="scientific">Bos taurus</name>
    <name type="common">Bovine</name>
    <dbReference type="NCBI Taxonomy" id="9913"/>
    <lineage>
        <taxon>Eukaryota</taxon>
        <taxon>Metazoa</taxon>
        <taxon>Chordata</taxon>
        <taxon>Craniata</taxon>
        <taxon>Vertebrata</taxon>
        <taxon>Euteleostomi</taxon>
        <taxon>Mammalia</taxon>
        <taxon>Eutheria</taxon>
        <taxon>Laurasiatheria</taxon>
        <taxon>Artiodactyla</taxon>
        <taxon>Ruminantia</taxon>
        <taxon>Pecora</taxon>
        <taxon>Bovidae</taxon>
        <taxon>Bovinae</taxon>
        <taxon>Bos</taxon>
    </lineage>
</organism>
<gene>
    <name type="primary">METTL15</name>
    <name type="synonym">METT5D1</name>
</gene>
<sequence>MLRYPYFCRIHKNFLSCWLESGIYNLGVWPKKIHATAERYNEYEAQEETDQTGIQELHRSQDRDSGVMTKLHIPVMVDEVVRCLAPQKGQVFLDMTFGSGGHTRAILQKEPDITLYALDRDPTAYAIAEQLSELYPKQIRAILGQFSQAEALLMKAGVQPGTLDGVLLDLGCSSMQLDTPERGFSLRKDGPLDMRMDGDRYPDMPTAADVVNALDQQALASILRAYGEEKHAKKIASAIIQARGLYPITRTQQLASIVAGAFPPSALYARKDLLQRPTHIATKTFQAFRIFVNNELNELYTGLKTAQKFLRPGGHLVALSFHSLEDRIIKRFLLGISMTERFNLSARQKVIQKSQLDSDQENKEGVSTGKAPLMWKLIHKKVLTPEDEDVQDNPRGRSAKLRAAIKL</sequence>
<feature type="transit peptide" description="Mitochondrion" evidence="3">
    <location>
        <begin position="1"/>
        <end status="unknown"/>
    </location>
</feature>
<feature type="chain" id="PRO_0000308331" description="12S rRNA N(4)-cytidine methyltransferase METTL15">
    <location>
        <begin status="unknown"/>
        <end position="407"/>
    </location>
</feature>
<feature type="region of interest" description="Disordered" evidence="4">
    <location>
        <begin position="44"/>
        <end position="63"/>
    </location>
</feature>
<feature type="region of interest" description="Disordered" evidence="4">
    <location>
        <begin position="386"/>
        <end position="407"/>
    </location>
</feature>
<feature type="compositionally biased region" description="Basic residues" evidence="4">
    <location>
        <begin position="397"/>
        <end position="407"/>
    </location>
</feature>
<feature type="binding site" evidence="2">
    <location>
        <begin position="100"/>
        <end position="102"/>
    </location>
    <ligand>
        <name>S-adenosyl-L-methionine</name>
        <dbReference type="ChEBI" id="CHEBI:59789"/>
    </ligand>
</feature>
<feature type="binding site" evidence="2">
    <location>
        <position position="119"/>
    </location>
    <ligand>
        <name>S-adenosyl-L-methionine</name>
        <dbReference type="ChEBI" id="CHEBI:59789"/>
    </ligand>
</feature>
<feature type="binding site" evidence="2">
    <location>
        <position position="146"/>
    </location>
    <ligand>
        <name>S-adenosyl-L-methionine</name>
        <dbReference type="ChEBI" id="CHEBI:59789"/>
    </ligand>
</feature>
<feature type="binding site" evidence="2">
    <location>
        <position position="169"/>
    </location>
    <ligand>
        <name>S-adenosyl-L-methionine</name>
        <dbReference type="ChEBI" id="CHEBI:59789"/>
    </ligand>
</feature>
<feature type="binding site" evidence="2">
    <location>
        <position position="176"/>
    </location>
    <ligand>
        <name>S-adenosyl-L-methionine</name>
        <dbReference type="ChEBI" id="CHEBI:59789"/>
    </ligand>
</feature>
<feature type="modified residue" description="Phosphoserine" evidence="1">
    <location>
        <position position="358"/>
    </location>
</feature>
<proteinExistence type="evidence at transcript level"/>
<comment type="function">
    <text evidence="1">N4-methylcytidine (m4C) methyltransferase responsible for the methylation of position C839 in mitochondrial 12S rRNA. Involved in the stabilization of 12S rRNA folding, therefore facilitating the assembly of the mitochondrial small ribosomal subunits.</text>
</comment>
<comment type="catalytic activity">
    <reaction evidence="1">
        <text>cytidine(839) in 12S rRNA + S-adenosyl-L-methionine = N(4)-methylcytidine(839) in 12S rRNA + S-adenosyl-L-homocysteine + H(+)</text>
        <dbReference type="Rhea" id="RHEA:62524"/>
        <dbReference type="Rhea" id="RHEA-COMP:16109"/>
        <dbReference type="Rhea" id="RHEA-COMP:16110"/>
        <dbReference type="ChEBI" id="CHEBI:15378"/>
        <dbReference type="ChEBI" id="CHEBI:57856"/>
        <dbReference type="ChEBI" id="CHEBI:59789"/>
        <dbReference type="ChEBI" id="CHEBI:74506"/>
        <dbReference type="ChEBI" id="CHEBI:82748"/>
    </reaction>
    <physiologicalReaction direction="left-to-right" evidence="1">
        <dbReference type="Rhea" id="RHEA:62525"/>
    </physiologicalReaction>
</comment>
<comment type="subcellular location">
    <subcellularLocation>
        <location evidence="1">Mitochondrion matrix</location>
    </subcellularLocation>
</comment>
<comment type="similarity">
    <text evidence="5">Belongs to the methyltransferase superfamily. RsmH family.</text>
</comment>
<name>MET15_BOVIN</name>
<protein>
    <recommendedName>
        <fullName>12S rRNA N(4)-cytidine methyltransferase METTL15</fullName>
        <shortName>12S rRNA m4C methyltransferase</shortName>
        <ecNumber>2.1.1.-</ecNumber>
    </recommendedName>
    <alternativeName>
        <fullName>Methyltransferase 5 domain-containing protein 1</fullName>
    </alternativeName>
    <alternativeName>
        <fullName>Methyltransferase-like protein 15</fullName>
    </alternativeName>
</protein>
<dbReference type="EC" id="2.1.1.-"/>
<dbReference type="EMBL" id="BC126575">
    <property type="protein sequence ID" value="AAI26576.1"/>
    <property type="molecule type" value="mRNA"/>
</dbReference>
<dbReference type="RefSeq" id="NP_001073250.1">
    <property type="nucleotide sequence ID" value="NM_001079782.2"/>
</dbReference>
<dbReference type="RefSeq" id="XP_005216340.1">
    <property type="nucleotide sequence ID" value="XM_005216283.3"/>
</dbReference>
<dbReference type="RefSeq" id="XP_005216342.1">
    <property type="nucleotide sequence ID" value="XM_005216285.3"/>
</dbReference>
<dbReference type="RefSeq" id="XP_010811027.1">
    <property type="nucleotide sequence ID" value="XM_010812725.2"/>
</dbReference>
<dbReference type="RefSeq" id="XP_059730771.1">
    <property type="nucleotide sequence ID" value="XM_059874788.1"/>
</dbReference>
<dbReference type="RefSeq" id="XP_059730772.1">
    <property type="nucleotide sequence ID" value="XM_059874789.1"/>
</dbReference>
<dbReference type="SMR" id="A0JN95"/>
<dbReference type="FunCoup" id="A0JN95">
    <property type="interactions" value="617"/>
</dbReference>
<dbReference type="STRING" id="9913.ENSBTAP00000042150"/>
<dbReference type="PaxDb" id="9913-ENSBTAP00000042150"/>
<dbReference type="Ensembl" id="ENSBTAT00000044672.4">
    <property type="protein sequence ID" value="ENSBTAP00000042150.3"/>
    <property type="gene ID" value="ENSBTAG00000003361.7"/>
</dbReference>
<dbReference type="GeneID" id="533987"/>
<dbReference type="KEGG" id="bta:533987"/>
<dbReference type="CTD" id="196074"/>
<dbReference type="VEuPathDB" id="HostDB:ENSBTAG00000003361"/>
<dbReference type="VGNC" id="VGNC:54885">
    <property type="gene designation" value="METTL15"/>
</dbReference>
<dbReference type="eggNOG" id="KOG2782">
    <property type="taxonomic scope" value="Eukaryota"/>
</dbReference>
<dbReference type="GeneTree" id="ENSGT00390000014756"/>
<dbReference type="HOGENOM" id="CLU_038422_1_0_1"/>
<dbReference type="InParanoid" id="A0JN95"/>
<dbReference type="OMA" id="NPAKRTF"/>
<dbReference type="OrthoDB" id="16290at2759"/>
<dbReference type="TreeFam" id="TF106425"/>
<dbReference type="Proteomes" id="UP000009136">
    <property type="component" value="Chromosome 15"/>
</dbReference>
<dbReference type="Bgee" id="ENSBTAG00000003361">
    <property type="expression patterns" value="Expressed in cardiac ventricle and 104 other cell types or tissues"/>
</dbReference>
<dbReference type="GO" id="GO:0005759">
    <property type="term" value="C:mitochondrial matrix"/>
    <property type="evidence" value="ECO:0007669"/>
    <property type="project" value="UniProtKB-SubCell"/>
</dbReference>
<dbReference type="GO" id="GO:0071424">
    <property type="term" value="F:rRNA (cytosine-N4-)-methyltransferase activity"/>
    <property type="evidence" value="ECO:0000318"/>
    <property type="project" value="GO_Central"/>
</dbReference>
<dbReference type="GO" id="GO:0070475">
    <property type="term" value="P:rRNA base methylation"/>
    <property type="evidence" value="ECO:0000318"/>
    <property type="project" value="GO_Central"/>
</dbReference>
<dbReference type="FunFam" id="1.10.150.170:FF:000002">
    <property type="entry name" value="Probable methyltransferase-like protein 15"/>
    <property type="match status" value="1"/>
</dbReference>
<dbReference type="FunFam" id="3.40.50.150:FF:000226">
    <property type="entry name" value="probable methyltransferase-like protein 15 isoform X3"/>
    <property type="match status" value="1"/>
</dbReference>
<dbReference type="Gene3D" id="1.10.150.170">
    <property type="entry name" value="Putative methyltransferase TM0872, insert domain"/>
    <property type="match status" value="1"/>
</dbReference>
<dbReference type="Gene3D" id="3.40.50.150">
    <property type="entry name" value="Vaccinia Virus protein VP39"/>
    <property type="match status" value="1"/>
</dbReference>
<dbReference type="HAMAP" id="MF_01007">
    <property type="entry name" value="16SrRNA_methyltr_H"/>
    <property type="match status" value="1"/>
</dbReference>
<dbReference type="InterPro" id="IPR002903">
    <property type="entry name" value="RsmH"/>
</dbReference>
<dbReference type="InterPro" id="IPR023397">
    <property type="entry name" value="SAM-dep_MeTrfase_MraW_recog"/>
</dbReference>
<dbReference type="InterPro" id="IPR029063">
    <property type="entry name" value="SAM-dependent_MTases_sf"/>
</dbReference>
<dbReference type="NCBIfam" id="TIGR00006">
    <property type="entry name" value="16S rRNA (cytosine(1402)-N(4))-methyltransferase RsmH"/>
    <property type="match status" value="1"/>
</dbReference>
<dbReference type="PANTHER" id="PTHR11265:SF0">
    <property type="entry name" value="12S RRNA N4-METHYLCYTIDINE METHYLTRANSFERASE"/>
    <property type="match status" value="1"/>
</dbReference>
<dbReference type="PANTHER" id="PTHR11265">
    <property type="entry name" value="S-ADENOSYL-METHYLTRANSFERASE MRAW"/>
    <property type="match status" value="1"/>
</dbReference>
<dbReference type="Pfam" id="PF01795">
    <property type="entry name" value="Methyltransf_5"/>
    <property type="match status" value="1"/>
</dbReference>
<dbReference type="SUPFAM" id="SSF81799">
    <property type="entry name" value="Putative methyltransferase TM0872, insert domain"/>
    <property type="match status" value="1"/>
</dbReference>
<dbReference type="SUPFAM" id="SSF53335">
    <property type="entry name" value="S-adenosyl-L-methionine-dependent methyltransferases"/>
    <property type="match status" value="1"/>
</dbReference>
<keyword id="KW-0489">Methyltransferase</keyword>
<keyword id="KW-0496">Mitochondrion</keyword>
<keyword id="KW-0597">Phosphoprotein</keyword>
<keyword id="KW-1185">Reference proteome</keyword>
<keyword id="KW-0949">S-adenosyl-L-methionine</keyword>
<keyword id="KW-0808">Transferase</keyword>
<keyword id="KW-0809">Transit peptide</keyword>
<accession>A0JN95</accession>
<reference key="1">
    <citation type="submission" date="2006-10" db="EMBL/GenBank/DDBJ databases">
        <authorList>
            <consortium name="NIH - Mammalian Gene Collection (MGC) project"/>
        </authorList>
    </citation>
    <scope>NUCLEOTIDE SEQUENCE [LARGE SCALE MRNA]</scope>
    <source>
        <strain>Hereford</strain>
        <tissue>Placenta</tissue>
    </source>
</reference>